<proteinExistence type="inferred from homology"/>
<sequence>MEIRIFRQDDFEAVITLWERCDLLRPWNDPEMDIERKLNHDPDLFLVAEVNGEIVGSVMGGYDGHRGSAYYLGVHPDFRGRGIANALISRLEKKLIARGCPKIHLMVREDNDAVIGMYEKLEYETVDCITLGKRLIEDREY</sequence>
<dbReference type="EC" id="2.3.1.-" evidence="1"/>
<dbReference type="EMBL" id="BX950851">
    <property type="protein sequence ID" value="CAG73787.1"/>
    <property type="molecule type" value="Genomic_DNA"/>
</dbReference>
<dbReference type="RefSeq" id="WP_011092478.1">
    <property type="nucleotide sequence ID" value="NC_004547.2"/>
</dbReference>
<dbReference type="SMR" id="Q6D8U7"/>
<dbReference type="STRING" id="218491.ECA0875"/>
<dbReference type="KEGG" id="eca:ECA0875"/>
<dbReference type="eggNOG" id="COG0456">
    <property type="taxonomic scope" value="Bacteria"/>
</dbReference>
<dbReference type="HOGENOM" id="CLU_013985_34_1_6"/>
<dbReference type="OrthoDB" id="1821130at2"/>
<dbReference type="Proteomes" id="UP000007966">
    <property type="component" value="Chromosome"/>
</dbReference>
<dbReference type="GO" id="GO:0016747">
    <property type="term" value="F:acyltransferase activity, transferring groups other than amino-acyl groups"/>
    <property type="evidence" value="ECO:0007669"/>
    <property type="project" value="UniProtKB-UniRule"/>
</dbReference>
<dbReference type="CDD" id="cd04301">
    <property type="entry name" value="NAT_SF"/>
    <property type="match status" value="1"/>
</dbReference>
<dbReference type="Gene3D" id="3.40.630.30">
    <property type="match status" value="1"/>
</dbReference>
<dbReference type="HAMAP" id="MF_01127">
    <property type="entry name" value="Acetyltransf_YpeA"/>
    <property type="match status" value="1"/>
</dbReference>
<dbReference type="InterPro" id="IPR023072">
    <property type="entry name" value="Acetyltransferase_YpeA"/>
</dbReference>
<dbReference type="InterPro" id="IPR016181">
    <property type="entry name" value="Acyl_CoA_acyltransferase"/>
</dbReference>
<dbReference type="InterPro" id="IPR000182">
    <property type="entry name" value="GNAT_dom"/>
</dbReference>
<dbReference type="NCBIfam" id="NF002959">
    <property type="entry name" value="PRK03624.1"/>
    <property type="match status" value="1"/>
</dbReference>
<dbReference type="PANTHER" id="PTHR43072:SF51">
    <property type="entry name" value="ABC SUPERFAMILY TRANSPORT PROTEIN"/>
    <property type="match status" value="1"/>
</dbReference>
<dbReference type="PANTHER" id="PTHR43072">
    <property type="entry name" value="N-ACETYLTRANSFERASE"/>
    <property type="match status" value="1"/>
</dbReference>
<dbReference type="Pfam" id="PF00583">
    <property type="entry name" value="Acetyltransf_1"/>
    <property type="match status" value="1"/>
</dbReference>
<dbReference type="SUPFAM" id="SSF55729">
    <property type="entry name" value="Acyl-CoA N-acyltransferases (Nat)"/>
    <property type="match status" value="1"/>
</dbReference>
<dbReference type="PROSITE" id="PS51186">
    <property type="entry name" value="GNAT"/>
    <property type="match status" value="1"/>
</dbReference>
<protein>
    <recommendedName>
        <fullName evidence="1">Acetyltransferase ECA0875</fullName>
        <ecNumber evidence="1">2.3.1.-</ecNumber>
    </recommendedName>
</protein>
<organism>
    <name type="scientific">Pectobacterium atrosepticum (strain SCRI 1043 / ATCC BAA-672)</name>
    <name type="common">Erwinia carotovora subsp. atroseptica</name>
    <dbReference type="NCBI Taxonomy" id="218491"/>
    <lineage>
        <taxon>Bacteria</taxon>
        <taxon>Pseudomonadati</taxon>
        <taxon>Pseudomonadota</taxon>
        <taxon>Gammaproteobacteria</taxon>
        <taxon>Enterobacterales</taxon>
        <taxon>Pectobacteriaceae</taxon>
        <taxon>Pectobacterium</taxon>
    </lineage>
</organism>
<reference key="1">
    <citation type="journal article" date="2004" name="Proc. Natl. Acad. Sci. U.S.A.">
        <title>Genome sequence of the enterobacterial phytopathogen Erwinia carotovora subsp. atroseptica and characterization of virulence factors.</title>
        <authorList>
            <person name="Bell K.S."/>
            <person name="Sebaihia M."/>
            <person name="Pritchard L."/>
            <person name="Holden M.T.G."/>
            <person name="Hyman L.J."/>
            <person name="Holeva M.C."/>
            <person name="Thomson N.R."/>
            <person name="Bentley S.D."/>
            <person name="Churcher L.J.C."/>
            <person name="Mungall K."/>
            <person name="Atkin R."/>
            <person name="Bason N."/>
            <person name="Brooks K."/>
            <person name="Chillingworth T."/>
            <person name="Clark K."/>
            <person name="Doggett J."/>
            <person name="Fraser A."/>
            <person name="Hance Z."/>
            <person name="Hauser H."/>
            <person name="Jagels K."/>
            <person name="Moule S."/>
            <person name="Norbertczak H."/>
            <person name="Ormond D."/>
            <person name="Price C."/>
            <person name="Quail M.A."/>
            <person name="Sanders M."/>
            <person name="Walker D."/>
            <person name="Whitehead S."/>
            <person name="Salmond G.P.C."/>
            <person name="Birch P.R.J."/>
            <person name="Parkhill J."/>
            <person name="Toth I.K."/>
        </authorList>
    </citation>
    <scope>NUCLEOTIDE SEQUENCE [LARGE SCALE GENOMIC DNA]</scope>
    <source>
        <strain>SCRI 1043 / ATCC BAA-672</strain>
    </source>
</reference>
<keyword id="KW-0012">Acyltransferase</keyword>
<keyword id="KW-1185">Reference proteome</keyword>
<keyword id="KW-0808">Transferase</keyword>
<comment type="similarity">
    <text evidence="1">Belongs to the acetyltransferase family. YpeA subfamily.</text>
</comment>
<feature type="chain" id="PRO_0000298438" description="Acetyltransferase ECA0875">
    <location>
        <begin position="1"/>
        <end position="141"/>
    </location>
</feature>
<feature type="domain" description="N-acetyltransferase" evidence="1">
    <location>
        <begin position="1"/>
        <end position="141"/>
    </location>
</feature>
<gene>
    <name type="ordered locus">ECA0875</name>
</gene>
<name>Y875_PECAS</name>
<accession>Q6D8U7</accession>
<evidence type="ECO:0000255" key="1">
    <source>
        <dbReference type="HAMAP-Rule" id="MF_01127"/>
    </source>
</evidence>